<gene>
    <name evidence="1 3" type="primary">bioU</name>
    <name type="ordered locus">HFX_5078</name>
    <name type="ORF">BM92_18625</name>
    <name type="ORF">C439_00820</name>
    <name type="ORF">E6P09_18710</name>
</gene>
<reference key="1">
    <citation type="journal article" date="2012" name="J. Bacteriol.">
        <title>Complete genome sequence of the metabolically versatile halophilic archaeon Haloferax mediterranei, a poly(3-hydroxybutyrate-co-3-hydroxyvalerate) producer.</title>
        <authorList>
            <person name="Han J."/>
            <person name="Zhang F."/>
            <person name="Hou J."/>
            <person name="Liu X."/>
            <person name="Li M."/>
            <person name="Liu H."/>
            <person name="Cai L."/>
            <person name="Zhang B."/>
            <person name="Chen Y."/>
            <person name="Zhou J."/>
            <person name="Hu S."/>
            <person name="Xiang H."/>
        </authorList>
    </citation>
    <scope>NUCLEOTIDE SEQUENCE [LARGE SCALE GENOMIC DNA]</scope>
    <source>
        <strain>ATCC 33500 / DSM 1411 / JCM 8866 / NBRC 14739 / NCIMB 2177 / R-4</strain>
        <plasmid evidence="7">pHM300</plasmid>
    </source>
</reference>
<reference key="2">
    <citation type="journal article" date="2014" name="PLoS Genet.">
        <title>Phylogenetically driven sequencing of extremely halophilic archaea reveals strategies for static and dynamic osmo-response.</title>
        <authorList>
            <person name="Becker E.A."/>
            <person name="Seitzer P.M."/>
            <person name="Tritt A."/>
            <person name="Larsen D."/>
            <person name="Krusor M."/>
            <person name="Yao A.I."/>
            <person name="Wu D."/>
            <person name="Madern D."/>
            <person name="Eisen J.A."/>
            <person name="Darling A.E."/>
            <person name="Facciotti M.T."/>
        </authorList>
    </citation>
    <scope>NUCLEOTIDE SEQUENCE [LARGE SCALE GENOMIC DNA]</scope>
    <source>
        <strain>ATCC 33500 / DSM 1411 / JCM 8866 / NBRC 14739 / NCIMB 2177 / R-4</strain>
    </source>
</reference>
<reference key="3">
    <citation type="submission" date="2014-04" db="EMBL/GenBank/DDBJ databases">
        <title>Transcriptional profiles of Haloferax mediterranei on the basis of nitrogen availability.</title>
        <authorList>
            <person name="Bautista V."/>
        </authorList>
    </citation>
    <scope>NUCLEOTIDE SEQUENCE [LARGE SCALE GENOMIC DNA]</scope>
    <source>
        <strain>ATCC 33500 / DSM 1411 / JCM 8866 / NBRC 14739 / NCIMB 2177 / R-4</strain>
        <plasmid evidence="6">HMPLAS2</plasmid>
    </source>
</reference>
<reference key="4">
    <citation type="submission" date="2019-04" db="EMBL/GenBank/DDBJ databases">
        <title>Methylomes of two halophilic Archaea, Haloarcula marismortui and Haloferax mediterranei.</title>
        <authorList>
            <person name="DasSarma S."/>
            <person name="DasSarma P."/>
            <person name="DasSarma S."/>
            <person name="Fomenkov A."/>
            <person name="Vincze T."/>
            <person name="Anton B.P."/>
            <person name="Roberts R.J."/>
        </authorList>
    </citation>
    <scope>NUCLEOTIDE SEQUENCE [LARGE SCALE GENOMIC DNA]</scope>
    <source>
        <strain>ATCC 33500 / DSM 1411 / JCM 8866 / NBRC 14739 / NCIMB 2177 / R-4</strain>
        <plasmid>pHME322</plasmid>
    </source>
</reference>
<reference key="5">
    <citation type="journal article" date="2020" name="Nat. Chem. Biol.">
        <title>A suicide enzyme catalyzes multiple reactions for biotin biosynthesis in cyanobacteria.</title>
        <authorList>
            <person name="Sakaki K."/>
            <person name="Ohishi K."/>
            <person name="Shimizu T."/>
            <person name="Kobayashi I."/>
            <person name="Mori N."/>
            <person name="Matsuda K."/>
            <person name="Tomita T."/>
            <person name="Watanabe H."/>
            <person name="Tanaka K."/>
            <person name="Kuzuyama T."/>
            <person name="Nishiyama M."/>
        </authorList>
    </citation>
    <scope>FUNCTION</scope>
    <source>
        <strain>ATCC 33500 / DSM 1411 / JCM 8866 / NBRC 14739 / NCIMB 2177 / R-4</strain>
        <plasmid>pHM300</plasmid>
    </source>
</reference>
<comment type="function">
    <text evidence="1 2">A 'suicide' enzyme that participates in biotin synthesis. Catalyzes the formation of (S)-8-amino-7-oxononanoate (DAN-carbamic acid) from (7R,8S)-8-amino-7-(carboxyamino)nonanoate (DAN), a function equivalent to the cannonical BioA reaction and the first half-reaction of BioD. The cellular requirement for biotin is thought be low enough that this single turnover enzyme supplies a sufficient amount of the cofactor. Overall it catalyzes three reactions: formation of a covalent linkage with 8-amino-7-oxononanoate to yield a BioU-DAN conjugate at the epsilon-amino group of Lys124 of BioU using NAD(P)H, carboxylation of the conjugate to form BioU-DAN-carbamic acid, and release of DAN-carbamic acid using NAD(P)+ (By similarity). Complements a bioA deletion in E.coli (PubMed:32042199).</text>
</comment>
<comment type="catalytic activity">
    <reaction evidence="1 5">
        <text>(8S)-8-amino-7-oxononanoate + L-lysyl-[protein] + CO2 = (S)-2-amino-6-oxohexanoyl-[protein] + (7R,8S)-8-amino-7-(carboxyamino)nonanoate + 2 H(+)</text>
        <dbReference type="Rhea" id="RHEA:63660"/>
        <dbReference type="Rhea" id="RHEA-COMP:9752"/>
        <dbReference type="Rhea" id="RHEA-COMP:12448"/>
        <dbReference type="ChEBI" id="CHEBI:15378"/>
        <dbReference type="ChEBI" id="CHEBI:16526"/>
        <dbReference type="ChEBI" id="CHEBI:29969"/>
        <dbReference type="ChEBI" id="CHEBI:131803"/>
        <dbReference type="ChEBI" id="CHEBI:149468"/>
        <dbReference type="ChEBI" id="CHEBI:149470"/>
        <dbReference type="EC" id="2.6.1.121"/>
    </reaction>
    <physiologicalReaction direction="left-to-right" evidence="1 5">
        <dbReference type="Rhea" id="RHEA:63661"/>
    </physiologicalReaction>
</comment>
<comment type="catalytic activity">
    <reaction evidence="1 5">
        <text>(8S)-8-amino-7-oxononanoate + L-lysyl-[protein] + NADPH + H(+) = N(6)-[(2S,3R)-2-amino-8-carboxyoctan-3-yl]-L-lysyl-[protein] + NADP(+) + H2O</text>
        <dbReference type="Rhea" id="RHEA:63664"/>
        <dbReference type="Rhea" id="RHEA-COMP:9752"/>
        <dbReference type="Rhea" id="RHEA-COMP:16405"/>
        <dbReference type="ChEBI" id="CHEBI:15377"/>
        <dbReference type="ChEBI" id="CHEBI:15378"/>
        <dbReference type="ChEBI" id="CHEBI:29969"/>
        <dbReference type="ChEBI" id="CHEBI:57783"/>
        <dbReference type="ChEBI" id="CHEBI:58349"/>
        <dbReference type="ChEBI" id="CHEBI:149468"/>
        <dbReference type="ChEBI" id="CHEBI:149472"/>
    </reaction>
    <physiologicalReaction direction="left-to-right" evidence="1 5">
        <dbReference type="Rhea" id="RHEA:63665"/>
    </physiologicalReaction>
</comment>
<comment type="catalytic activity">
    <reaction evidence="1 5">
        <text>N(6)-[(2S,3R)-2-amino-8-carboxyoctan-3-yl]-L-lysyl-[protein] + CO2 + NADP(+) + H2O = (S)-2-amino-6-oxohexanoyl-[protein] + (7R,8S)-8-amino-7-(carboxyamino)nonanoate + NADPH + 3 H(+)</text>
        <dbReference type="Rhea" id="RHEA:63668"/>
        <dbReference type="Rhea" id="RHEA-COMP:12448"/>
        <dbReference type="Rhea" id="RHEA-COMP:16405"/>
        <dbReference type="ChEBI" id="CHEBI:15377"/>
        <dbReference type="ChEBI" id="CHEBI:15378"/>
        <dbReference type="ChEBI" id="CHEBI:16526"/>
        <dbReference type="ChEBI" id="CHEBI:57783"/>
        <dbReference type="ChEBI" id="CHEBI:58349"/>
        <dbReference type="ChEBI" id="CHEBI:131803"/>
        <dbReference type="ChEBI" id="CHEBI:149470"/>
        <dbReference type="ChEBI" id="CHEBI:149472"/>
    </reaction>
    <physiologicalReaction direction="left-to-right" evidence="1 5">
        <dbReference type="Rhea" id="RHEA:63669"/>
    </physiologicalReaction>
</comment>
<comment type="catalytic activity">
    <reaction evidence="1 5">
        <text>(8S)-8-amino-7-oxononanoate + L-lysyl-[protein] + NADH + H(+) = N(6)-[(2S,3R)-2-amino-8-carboxyoctan-3-yl]-L-lysyl-[protein] + NAD(+) + H2O</text>
        <dbReference type="Rhea" id="RHEA:63672"/>
        <dbReference type="Rhea" id="RHEA-COMP:9752"/>
        <dbReference type="Rhea" id="RHEA-COMP:16405"/>
        <dbReference type="ChEBI" id="CHEBI:15377"/>
        <dbReference type="ChEBI" id="CHEBI:15378"/>
        <dbReference type="ChEBI" id="CHEBI:29969"/>
        <dbReference type="ChEBI" id="CHEBI:57540"/>
        <dbReference type="ChEBI" id="CHEBI:57945"/>
        <dbReference type="ChEBI" id="CHEBI:149468"/>
        <dbReference type="ChEBI" id="CHEBI:149472"/>
    </reaction>
    <physiologicalReaction direction="left-to-right" evidence="1 5">
        <dbReference type="Rhea" id="RHEA:63673"/>
    </physiologicalReaction>
</comment>
<comment type="catalytic activity">
    <reaction evidence="1 5">
        <text>N(6)-[(2S,3R)-2-amino-8-carboxyoctan-3-yl]-L-lysyl-[protein] + CO2 + NAD(+) + H2O = (S)-2-amino-6-oxohexanoyl-[protein] + (7R,8S)-8-amino-7-(carboxyamino)nonanoate + NADH + 3 H(+)</text>
        <dbReference type="Rhea" id="RHEA:63676"/>
        <dbReference type="Rhea" id="RHEA-COMP:12448"/>
        <dbReference type="Rhea" id="RHEA-COMP:16405"/>
        <dbReference type="ChEBI" id="CHEBI:15377"/>
        <dbReference type="ChEBI" id="CHEBI:15378"/>
        <dbReference type="ChEBI" id="CHEBI:16526"/>
        <dbReference type="ChEBI" id="CHEBI:57540"/>
        <dbReference type="ChEBI" id="CHEBI:57945"/>
        <dbReference type="ChEBI" id="CHEBI:131803"/>
        <dbReference type="ChEBI" id="CHEBI:149470"/>
        <dbReference type="ChEBI" id="CHEBI:149472"/>
    </reaction>
    <physiologicalReaction direction="left-to-right" evidence="1 5">
        <dbReference type="Rhea" id="RHEA:63677"/>
    </physiologicalReaction>
</comment>
<comment type="pathway">
    <text evidence="1 2">Cofactor biosynthesis; biotin biosynthesis.</text>
</comment>
<comment type="subunit">
    <text evidence="1">Monomer.</text>
</comment>
<comment type="miscellaneous">
    <text evidence="1 4">In cannonical biotin synthesis a pimeloyl-conjugate is transformed into biotin by the subsequent action of BioF, BioA, BioD and BioB. This enzyme replaces BioA and performs the first half-reaction of BioD.</text>
</comment>
<comment type="similarity">
    <text evidence="1 4">Belongs to the BioU family.</text>
</comment>
<sequence>MDEINFAVLGTGGIGRRTLEVSTYKDGLTPVAACDRHGVAVNHDGLDVEEILDATEGNIAGDGTGDTEDKRVTDGGAAVKQHGDGAGIVASAQGTSTETPIDEIIAESDEIDAVLLALPNLEHDFIPRIAERFAEAEFEGVLIDVLKRSRVIGMLDDREETLVESGITFVCGAGATPGLLTGAAALAAQSFVEVEEVEIWWGVGLKSGYEDNRGTVREDIAHLDGYDIETAREMDESEIEAVIEEHDGVLEFNDMEHADDVLLERAGICDAEDVTVGGILDIRKDEKPTTTTVRVTGRTFDGKRGTNTFQLDDATSMAANVNGPALGYLKSAVRRNRAGDYGVFGPAELMPGF</sequence>
<dbReference type="EC" id="2.6.1.121" evidence="1 5"/>
<dbReference type="EMBL" id="CP001870">
    <property type="protein sequence ID" value="AFK20913.1"/>
    <property type="molecule type" value="Genomic_DNA"/>
</dbReference>
<dbReference type="EMBL" id="CP007553">
    <property type="protein sequence ID" value="AHZ24218.1"/>
    <property type="molecule type" value="Genomic_DNA"/>
</dbReference>
<dbReference type="EMBL" id="AOLO01000001">
    <property type="protein sequence ID" value="EMA05297.1"/>
    <property type="molecule type" value="Genomic_DNA"/>
</dbReference>
<dbReference type="EMBL" id="CP039141">
    <property type="protein sequence ID" value="QCQ77342.1"/>
    <property type="molecule type" value="Genomic_DNA"/>
</dbReference>
<dbReference type="RefSeq" id="WP_004056369.1">
    <property type="nucleotide sequence ID" value="NC_017943.1"/>
</dbReference>
<dbReference type="SMR" id="I3R9K3"/>
<dbReference type="GeneID" id="40158493"/>
<dbReference type="KEGG" id="hme:HFX_5078"/>
<dbReference type="PATRIC" id="fig|523841.21.peg.164"/>
<dbReference type="HOGENOM" id="CLU_072022_0_0_2"/>
<dbReference type="OrthoDB" id="146750at2157"/>
<dbReference type="UniPathway" id="UPA00078"/>
<dbReference type="Proteomes" id="UP000006469">
    <property type="component" value="Plasmid pHM300"/>
</dbReference>
<dbReference type="Proteomes" id="UP000011603">
    <property type="component" value="Unassembled WGS sequence"/>
</dbReference>
<dbReference type="Proteomes" id="UP000027075">
    <property type="component" value="Plasmid HMPLAS2"/>
</dbReference>
<dbReference type="Proteomes" id="UP000299011">
    <property type="component" value="Plasmid pHME322"/>
</dbReference>
<dbReference type="GO" id="GO:0051287">
    <property type="term" value="F:NAD binding"/>
    <property type="evidence" value="ECO:0007669"/>
    <property type="project" value="UniProtKB-UniRule"/>
</dbReference>
<dbReference type="GO" id="GO:0050661">
    <property type="term" value="F:NADP binding"/>
    <property type="evidence" value="ECO:0007669"/>
    <property type="project" value="UniProtKB-UniRule"/>
</dbReference>
<dbReference type="GO" id="GO:0008483">
    <property type="term" value="F:transaminase activity"/>
    <property type="evidence" value="ECO:0007669"/>
    <property type="project" value="UniProtKB-KW"/>
</dbReference>
<dbReference type="GO" id="GO:0009102">
    <property type="term" value="P:biotin biosynthetic process"/>
    <property type="evidence" value="ECO:0000315"/>
    <property type="project" value="UniProtKB"/>
</dbReference>
<dbReference type="Gene3D" id="3.40.50.720">
    <property type="entry name" value="NAD(P)-binding Rossmann-like Domain"/>
    <property type="match status" value="1"/>
</dbReference>
<dbReference type="HAMAP" id="MF_00852">
    <property type="entry name" value="BioU"/>
    <property type="match status" value="1"/>
</dbReference>
<dbReference type="InterPro" id="IPR044262">
    <property type="entry name" value="BioU-like"/>
</dbReference>
<dbReference type="InterPro" id="IPR036291">
    <property type="entry name" value="NAD(P)-bd_dom_sf"/>
</dbReference>
<dbReference type="SUPFAM" id="SSF51735">
    <property type="entry name" value="NAD(P)-binding Rossmann-fold domains"/>
    <property type="match status" value="1"/>
</dbReference>
<accession>I3R9K3</accession>
<keyword id="KW-0032">Aminotransferase</keyword>
<keyword id="KW-0093">Biotin biosynthesis</keyword>
<keyword id="KW-0520">NAD</keyword>
<keyword id="KW-0521">NADP</keyword>
<keyword id="KW-0547">Nucleotide-binding</keyword>
<keyword id="KW-0614">Plasmid</keyword>
<keyword id="KW-0808">Transferase</keyword>
<organism>
    <name type="scientific">Haloferax mediterranei (strain ATCC 33500 / DSM 1411 / JCM 8866 / NBRC 14739 / NCIMB 2177 / R-4)</name>
    <name type="common">Halobacterium mediterranei</name>
    <dbReference type="NCBI Taxonomy" id="523841"/>
    <lineage>
        <taxon>Archaea</taxon>
        <taxon>Methanobacteriati</taxon>
        <taxon>Methanobacteriota</taxon>
        <taxon>Stenosarchaea group</taxon>
        <taxon>Halobacteria</taxon>
        <taxon>Halobacteriales</taxon>
        <taxon>Haloferacaceae</taxon>
        <taxon>Haloferax</taxon>
    </lineage>
</organism>
<name>BIOU_HALMT</name>
<evidence type="ECO:0000255" key="1">
    <source>
        <dbReference type="HAMAP-Rule" id="MF_00852"/>
    </source>
</evidence>
<evidence type="ECO:0000269" key="2">
    <source>
    </source>
</evidence>
<evidence type="ECO:0000303" key="3">
    <source>
    </source>
</evidence>
<evidence type="ECO:0000305" key="4"/>
<evidence type="ECO:0000305" key="5">
    <source>
    </source>
</evidence>
<evidence type="ECO:0000312" key="6">
    <source>
        <dbReference type="EMBL" id="AHZ24218.1"/>
    </source>
</evidence>
<evidence type="ECO:0000312" key="7">
    <source>
        <dbReference type="Proteomes" id="UP000006469"/>
    </source>
</evidence>
<geneLocation type="plasmid">
    <name>HMPLAS2</name>
</geneLocation>
<geneLocation type="plasmid">
    <name>pHM300</name>
</geneLocation>
<geneLocation type="plasmid">
    <name>pHME322</name>
</geneLocation>
<feature type="chain" id="PRO_0000450576" description="(S)-8-amino-7-oxononanoate synthase BioU">
    <location>
        <begin position="1"/>
        <end position="353"/>
    </location>
</feature>
<feature type="active site" description="Nucleophile" evidence="1">
    <location>
        <position position="147"/>
    </location>
</feature>
<feature type="active site" description="Proton acceptor" evidence="1">
    <location>
        <position position="218"/>
    </location>
</feature>
<feature type="active site" description="Proton donor and proton acceptor" evidence="1">
    <location>
        <position position="222"/>
    </location>
</feature>
<feature type="binding site" evidence="1">
    <location>
        <begin position="10"/>
        <end position="14"/>
    </location>
    <ligand>
        <name>NAD(+)</name>
        <dbReference type="ChEBI" id="CHEBI:57540"/>
    </ligand>
</feature>
<feature type="binding site" evidence="1">
    <location>
        <begin position="214"/>
        <end position="215"/>
    </location>
    <ligand>
        <name>NAD(+)</name>
        <dbReference type="ChEBI" id="CHEBI:57540"/>
    </ligand>
</feature>
<feature type="modified residue" description="Allysine" evidence="1">
    <location>
        <position position="147"/>
    </location>
</feature>
<protein>
    <recommendedName>
        <fullName evidence="1">(S)-8-amino-7-oxononanoate synthase BioU</fullName>
        <ecNumber evidence="1 5">2.6.1.121</ecNumber>
    </recommendedName>
    <alternativeName>
        <fullName evidence="1">8-amino-7-oxononanoate carboxylating dehydrogenase</fullName>
    </alternativeName>
</protein>
<proteinExistence type="inferred from homology"/>